<organism>
    <name type="scientific">Streptomyces coelicolor (strain ATCC BAA-471 / A3(2) / M145)</name>
    <dbReference type="NCBI Taxonomy" id="100226"/>
    <lineage>
        <taxon>Bacteria</taxon>
        <taxon>Bacillati</taxon>
        <taxon>Actinomycetota</taxon>
        <taxon>Actinomycetes</taxon>
        <taxon>Kitasatosporales</taxon>
        <taxon>Streptomycetaceae</taxon>
        <taxon>Streptomyces</taxon>
        <taxon>Streptomyces albidoflavus group</taxon>
    </lineage>
</organism>
<dbReference type="EMBL" id="AL939109">
    <property type="protein sequence ID" value="CAB93360.1"/>
    <property type="molecule type" value="Genomic_DNA"/>
</dbReference>
<dbReference type="RefSeq" id="NP_625760.1">
    <property type="nucleotide sequence ID" value="NC_003888.3"/>
</dbReference>
<dbReference type="RefSeq" id="WP_003977346.1">
    <property type="nucleotide sequence ID" value="NZ_VNID01000021.1"/>
</dbReference>
<dbReference type="PDB" id="4ITQ">
    <property type="method" value="X-ray"/>
    <property type="resolution" value="2.70 A"/>
    <property type="chains" value="A=1-107"/>
</dbReference>
<dbReference type="PDB" id="6BEK">
    <property type="method" value="X-ray"/>
    <property type="resolution" value="1.70 A"/>
    <property type="chains" value="A/D=1-107"/>
</dbReference>
<dbReference type="PDBsum" id="4ITQ"/>
<dbReference type="PDBsum" id="6BEK"/>
<dbReference type="SMR" id="Q9KXR9"/>
<dbReference type="STRING" id="100226.gene:17759066"/>
<dbReference type="PaxDb" id="100226-SCO1480"/>
<dbReference type="KEGG" id="sco:SCO1480"/>
<dbReference type="PATRIC" id="fig|100226.15.peg.1489"/>
<dbReference type="eggNOG" id="COG0099">
    <property type="taxonomic scope" value="Bacteria"/>
</dbReference>
<dbReference type="HOGENOM" id="CLU_151796_1_0_11"/>
<dbReference type="InParanoid" id="Q9KXR9"/>
<dbReference type="OrthoDB" id="3197442at2"/>
<dbReference type="PhylomeDB" id="Q9KXR9"/>
<dbReference type="EvolutionaryTrace" id="Q9KXR9"/>
<dbReference type="Proteomes" id="UP000001973">
    <property type="component" value="Chromosome"/>
</dbReference>
<dbReference type="GO" id="GO:0005737">
    <property type="term" value="C:cytoplasm"/>
    <property type="evidence" value="ECO:0007669"/>
    <property type="project" value="UniProtKB-SubCell"/>
</dbReference>
<dbReference type="GO" id="GO:0009295">
    <property type="term" value="C:nucleoid"/>
    <property type="evidence" value="ECO:0007669"/>
    <property type="project" value="UniProtKB-SubCell"/>
</dbReference>
<dbReference type="GO" id="GO:0003677">
    <property type="term" value="F:DNA binding"/>
    <property type="evidence" value="ECO:0007669"/>
    <property type="project" value="UniProtKB-KW"/>
</dbReference>
<dbReference type="GO" id="GO:0030261">
    <property type="term" value="P:chromosome condensation"/>
    <property type="evidence" value="ECO:0007669"/>
    <property type="project" value="UniProtKB-KW"/>
</dbReference>
<dbReference type="Gene3D" id="1.10.8.50">
    <property type="match status" value="1"/>
</dbReference>
<dbReference type="InterPro" id="IPR055201">
    <property type="entry name" value="IHF-like_H2TH"/>
</dbReference>
<dbReference type="InterPro" id="IPR047806">
    <property type="entry name" value="IHF_actinobact"/>
</dbReference>
<dbReference type="InterPro" id="IPR010979">
    <property type="entry name" value="Ribosomal_uS13-like_H2TH"/>
</dbReference>
<dbReference type="NCBIfam" id="NF041260">
    <property type="entry name" value="actino_IHF"/>
    <property type="match status" value="1"/>
</dbReference>
<dbReference type="Pfam" id="PF22525">
    <property type="entry name" value="H2TH_5"/>
    <property type="match status" value="1"/>
</dbReference>
<dbReference type="SUPFAM" id="SSF46946">
    <property type="entry name" value="S13-like H2TH domain"/>
    <property type="match status" value="1"/>
</dbReference>
<dbReference type="PROSITE" id="PS50159">
    <property type="entry name" value="RIBOSOMAL_S13_2"/>
    <property type="match status" value="1"/>
</dbReference>
<reference evidence="11" key="1">
    <citation type="journal article" date="2002" name="Nature">
        <title>Complete genome sequence of the model actinomycete Streptomyces coelicolor A3(2).</title>
        <authorList>
            <person name="Bentley S.D."/>
            <person name="Chater K.F."/>
            <person name="Cerdeno-Tarraga A.-M."/>
            <person name="Challis G.L."/>
            <person name="Thomson N.R."/>
            <person name="James K.D."/>
            <person name="Harris D.E."/>
            <person name="Quail M.A."/>
            <person name="Kieser H."/>
            <person name="Harper D."/>
            <person name="Bateman A."/>
            <person name="Brown S."/>
            <person name="Chandra G."/>
            <person name="Chen C.W."/>
            <person name="Collins M."/>
            <person name="Cronin A."/>
            <person name="Fraser A."/>
            <person name="Goble A."/>
            <person name="Hidalgo J."/>
            <person name="Hornsby T."/>
            <person name="Howarth S."/>
            <person name="Huang C.-H."/>
            <person name="Kieser T."/>
            <person name="Larke L."/>
            <person name="Murphy L.D."/>
            <person name="Oliver K."/>
            <person name="O'Neil S."/>
            <person name="Rabbinowitsch E."/>
            <person name="Rajandream M.A."/>
            <person name="Rutherford K.M."/>
            <person name="Rutter S."/>
            <person name="Seeger K."/>
            <person name="Saunders D."/>
            <person name="Sharp S."/>
            <person name="Squares R."/>
            <person name="Squares S."/>
            <person name="Taylor K."/>
            <person name="Warren T."/>
            <person name="Wietzorrek A."/>
            <person name="Woodward J.R."/>
            <person name="Barrell B.G."/>
            <person name="Parkhill J."/>
            <person name="Hopwood D.A."/>
        </authorList>
    </citation>
    <scope>NUCLEOTIDE SEQUENCE [LARGE SCALE GENOMIC DNA]</scope>
    <source>
        <strain>ATCC BAA-471 / A3(2) / M145</strain>
    </source>
</reference>
<reference key="2">
    <citation type="journal article" date="2012" name="Antonie Van Leeuwenhoek">
        <title>A novel function of Streptomyces integration host factor (sIHF) in the control of antibiotic production and sporulation in Streptomyces coelicolor.</title>
        <authorList>
            <person name="Yang Y.H."/>
            <person name="Song E."/>
            <person name="Willemse J."/>
            <person name="Park S.H."/>
            <person name="Kim W.S."/>
            <person name="Kim E.J."/>
            <person name="Lee B.R."/>
            <person name="Kim J.N."/>
            <person name="van Wezel G.P."/>
            <person name="Kim B.G."/>
        </authorList>
    </citation>
    <scope>FUNCTION</scope>
    <scope>DISRUPTION PHENOTYPE</scope>
    <scope>DNA-BINDING</scope>
    <source>
        <strain>ATCC BAA-471 / A3(2) / M145</strain>
    </source>
</reference>
<reference key="3">
    <citation type="journal article" date="2013" name="J. Proteomics">
        <title>Proteomic survey of the Streptomyces coelicolor nucleoid.</title>
        <authorList>
            <person name="Bradshaw E."/>
            <person name="Saalbach G."/>
            <person name="McArthur M."/>
        </authorList>
    </citation>
    <scope>IDENTIFICATION BY MASS SPECTROMETRY</scope>
    <scope>SUBCELLULAR LOCATION</scope>
    <source>
        <strain>ATCC BAA-471 / A3(2) / M145</strain>
    </source>
</reference>
<reference evidence="14" key="4">
    <citation type="journal article" date="2013" name="Nucleic Acids Res.">
        <title>A novel nucleoid-associated protein specific to the actinobacteria.</title>
        <authorList>
            <person name="Swiercz J.P."/>
            <person name="Nanji T."/>
            <person name="Gloyd M."/>
            <person name="Guarne A."/>
            <person name="Elliot M.A."/>
        </authorList>
    </citation>
    <scope>X-RAY CRYSTALLOGRAPHY (2.70 ANGSTROMS) IN COMPLEX WITH DNA</scope>
    <scope>FUNCTION</scope>
    <scope>SUBUNIT</scope>
    <scope>SUBCELLULAR LOCATION</scope>
    <scope>INDUCTION</scope>
    <scope>DOMAIN</scope>
    <scope>DISRUPTION PHENOTYPE</scope>
    <scope>DNA-BINDING</scope>
    <source>
        <strain>A3(2) / M600</strain>
    </source>
</reference>
<reference evidence="15" key="5">
    <citation type="journal article" date="2019" name="Biochim. Biophys. Acta">
        <title>Streptomyces IHF uses multiple interfaces to bind DNA.</title>
        <authorList>
            <person name="Nanji T."/>
            <person name="Gehrke E.J."/>
            <person name="Shen Y."/>
            <person name="Gloyd M."/>
            <person name="Zhang X."/>
            <person name="Firby C.D."/>
            <person name="Huynh A."/>
            <person name="Razi A."/>
            <person name="Ortega J."/>
            <person name="Elliot M.A."/>
            <person name="Guarne A."/>
        </authorList>
    </citation>
    <scope>X-RAY CRYSTALLOGRAPHY (1.70 ANGSTROMS) IN COMPLEX WITH DNA</scope>
    <scope>FUNCTION</scope>
    <scope>DOMAIN</scope>
    <scope>DNA-BINDING</scope>
    <scope>MUTAGENESIS OF 2-ALA--ALA-13; 22-ARG--LYS-33; GLY-66; 85-ARG-ARG-86 AND 93-ASN-GLN-94</scope>
</reference>
<evidence type="ECO:0000256" key="1">
    <source>
        <dbReference type="SAM" id="MobiDB-lite"/>
    </source>
</evidence>
<evidence type="ECO:0000269" key="2">
    <source>
    </source>
</evidence>
<evidence type="ECO:0000269" key="3">
    <source>
    </source>
</evidence>
<evidence type="ECO:0000269" key="4">
    <source>
    </source>
</evidence>
<evidence type="ECO:0000269" key="5">
    <source>
    </source>
</evidence>
<evidence type="ECO:0000303" key="6">
    <source>
    </source>
</evidence>
<evidence type="ECO:0000305" key="7"/>
<evidence type="ECO:0000305" key="8">
    <source>
    </source>
</evidence>
<evidence type="ECO:0000305" key="9">
    <source>
    </source>
</evidence>
<evidence type="ECO:0000305" key="10">
    <source>
    </source>
</evidence>
<evidence type="ECO:0000312" key="11">
    <source>
        <dbReference type="EMBL" id="CAB93360.1"/>
    </source>
</evidence>
<evidence type="ECO:0000312" key="12">
    <source>
        <dbReference type="PDB" id="4ITQ"/>
    </source>
</evidence>
<evidence type="ECO:0000312" key="13">
    <source>
        <dbReference type="PDB" id="6BEK"/>
    </source>
</evidence>
<evidence type="ECO:0007744" key="14">
    <source>
        <dbReference type="PDB" id="4ITQ"/>
    </source>
</evidence>
<evidence type="ECO:0007744" key="15">
    <source>
        <dbReference type="PDB" id="6BEK"/>
    </source>
</evidence>
<evidence type="ECO:0007829" key="16">
    <source>
        <dbReference type="PDB" id="6BEK"/>
    </source>
</evidence>
<sequence>MALPPLTPEQRAAALEKAAAARRERAEVKNRLKHSGASLHEVIKQGQENDVIGKMKVSALLESLPGVGKVRAKQIMERLGISESRRVRGLGSNQIASLEREFGSTGS</sequence>
<gene>
    <name evidence="6" type="primary">sihF</name>
    <name evidence="11" type="synonym">SC9C5.04c</name>
    <name evidence="11" type="ordered locus">SCO1480</name>
</gene>
<protein>
    <recommendedName>
        <fullName evidence="7">Integration host factor</fullName>
    </recommendedName>
    <alternativeName>
        <fullName evidence="6">Streptomyces integration host factor</fullName>
        <shortName evidence="6">sIHF</shortName>
    </alternativeName>
</protein>
<keyword id="KW-0002">3D-structure</keyword>
<keyword id="KW-0010">Activator</keyword>
<keyword id="KW-0963">Cytoplasm</keyword>
<keyword id="KW-0226">DNA condensation</keyword>
<keyword id="KW-0238">DNA-binding</keyword>
<keyword id="KW-1185">Reference proteome</keyword>
<keyword id="KW-0678">Repressor</keyword>
<keyword id="KW-0804">Transcription</keyword>
<keyword id="KW-0805">Transcription regulation</keyword>
<proteinExistence type="evidence at protein level"/>
<name>IHF_STRCO</name>
<accession>Q9KXR9</accession>
<feature type="chain" id="PRO_0000458544" description="Integration host factor">
    <location>
        <begin position="1"/>
        <end position="107"/>
    </location>
</feature>
<feature type="region of interest" description="Disordered" evidence="1">
    <location>
        <begin position="1"/>
        <end position="20"/>
    </location>
</feature>
<feature type="region of interest" description="Lid, binds DNA" evidence="3 5">
    <location>
        <begin position="82"/>
        <end position="94"/>
    </location>
</feature>
<feature type="short sequence motif" description="H2TH motif, binds DNA" evidence="3 5">
    <location>
        <begin position="64"/>
        <end position="71"/>
    </location>
</feature>
<feature type="compositionally biased region" description="Low complexity" evidence="1">
    <location>
        <begin position="9"/>
        <end position="18"/>
    </location>
</feature>
<feature type="binding site" evidence="5 13">
    <location>
        <position position="54"/>
    </location>
    <ligand>
        <name>DNA</name>
        <dbReference type="ChEBI" id="CHEBI:16991"/>
    </ligand>
</feature>
<feature type="binding site" evidence="3 12">
    <location>
        <position position="82"/>
    </location>
    <ligand>
        <name>DNA</name>
        <dbReference type="ChEBI" id="CHEBI:16991"/>
    </ligand>
</feature>
<feature type="binding site" evidence="3 5 12 13">
    <location>
        <position position="85"/>
    </location>
    <ligand>
        <name>DNA</name>
        <dbReference type="ChEBI" id="CHEBI:16991"/>
    </ligand>
</feature>
<feature type="binding site" evidence="5 13">
    <location>
        <position position="88"/>
    </location>
    <ligand>
        <name>DNA</name>
        <dbReference type="ChEBI" id="CHEBI:16991"/>
    </ligand>
</feature>
<feature type="binding site" evidence="5 13">
    <location>
        <position position="92"/>
    </location>
    <ligand>
        <name>DNA</name>
        <dbReference type="ChEBI" id="CHEBI:16991"/>
    </ligand>
</feature>
<feature type="binding site" evidence="3 5 12 13">
    <location>
        <position position="93"/>
    </location>
    <ligand>
        <name>DNA</name>
        <dbReference type="ChEBI" id="CHEBI:16991"/>
    </ligand>
</feature>
<feature type="binding site" evidence="3 5 12 13">
    <location>
        <position position="94"/>
    </location>
    <ligand>
        <name>DNA</name>
        <dbReference type="ChEBI" id="CHEBI:16991"/>
    </ligand>
</feature>
<feature type="mutagenesis site" description="Protein does not stably accumulate in vivo, in vitro decreased DNA binding, decreased constraint of negative supercoils." evidence="5">
    <location>
        <begin position="2"/>
        <end position="13"/>
    </location>
</feature>
<feature type="mutagenesis site" description="Protein does not stably accumulate in vivo, in vitro strongly decreased DNA binding, decreased constraint of negative supercoils." evidence="5">
    <original>RRERAEVKNRLK</original>
    <variation>SRESAEVSNRLS</variation>
    <location>
        <begin position="22"/>
        <end position="33"/>
    </location>
</feature>
<feature type="mutagenesis site" description="Moderately decreased DNA binding, decreased constraint of negative supercoils, partially complements deletion mutant." evidence="5">
    <original>G</original>
    <variation>GG</variation>
    <location>
        <position position="66"/>
    </location>
</feature>
<feature type="mutagenesis site" description="Moderately decreased DNA binding, decreased constraint of negative supercoils." evidence="5">
    <original>RR</original>
    <variation>AS</variation>
    <location>
        <begin position="85"/>
        <end position="86"/>
    </location>
</feature>
<feature type="mutagenesis site" description="Moderately decreased DNA binding, decreased constraint of negative supercoils, partially complements deletion mutant." evidence="5">
    <original>NQ</original>
    <variation>AS</variation>
    <location>
        <begin position="93"/>
        <end position="94"/>
    </location>
</feature>
<feature type="helix" evidence="16">
    <location>
        <begin position="14"/>
        <end position="33"/>
    </location>
</feature>
<feature type="helix" evidence="16">
    <location>
        <begin position="39"/>
        <end position="45"/>
    </location>
</feature>
<feature type="turn" evidence="16">
    <location>
        <begin position="46"/>
        <end position="48"/>
    </location>
</feature>
<feature type="helix" evidence="16">
    <location>
        <begin position="50"/>
        <end position="53"/>
    </location>
</feature>
<feature type="helix" evidence="16">
    <location>
        <begin position="57"/>
        <end position="61"/>
    </location>
</feature>
<feature type="helix" evidence="16">
    <location>
        <begin position="69"/>
        <end position="79"/>
    </location>
</feature>
<feature type="helix" evidence="16">
    <location>
        <begin position="87"/>
        <end position="89"/>
    </location>
</feature>
<feature type="helix" evidence="16">
    <location>
        <begin position="92"/>
        <end position="102"/>
    </location>
</feature>
<comment type="function">
    <text evidence="2 3 5">A nucleoid-associated protein (NAP) that probably plays a role in chromosome compactation. Contributes to development and secondary metabolism, but is dispensable for growth and viability (PubMed:22038127, PubMed:23427309). Binds to the promoter region of a number of genes (including itself); multiple molecules of the protein bind to the DNA simultaneously, deletion alters the expression of about 30 genes (both up- and down-regulation occurs). Plays a role in controlling viability (PubMed:22038127). Binds dsDNA without any obvious sequence specificity, in a concentration and length-dependent manner. Promotes supercoiling in a topoisomerase-dependent manner (counteracts TopA plasmid relaxation). Binds DNA as a monomer, contacting 8 base pairs via the phosphate backbone; each monomer can bind 2 DNA duplexes, allowing a bridging function (PubMed:23427309). Alters DNA topology, constraining negative supercoils, possibly by DNA twist. Longer dsDNA binds more than one sIHF subunit (PubMed:31376411).</text>
</comment>
<comment type="subunit">
    <text evidence="3">Monomer.</text>
</comment>
<comment type="subcellular location">
    <subcellularLocation>
        <location evidence="3">Cytoplasm</location>
    </subcellularLocation>
    <subcellularLocation>
        <location evidence="3">Spore</location>
    </subcellularLocation>
    <subcellularLocation>
        <location evidence="3 4">Cytoplasm</location>
        <location evidence="3 4">Nucleoid</location>
    </subcellularLocation>
    <text evidence="3">Cytoplasmic, associates with the nucleoid in liquid culture and in spores.</text>
</comment>
<comment type="induction">
    <text evidence="3">Constitutively expressed on MS (minimal) or R2YE (rich) medium; more highly expressed on R2YE medium, levels decrease after 3 days on MS (at protein level).</text>
</comment>
<comment type="domain">
    <text evidence="3 5">The N-terminus (up to residue 33) is important in DNA binding in solution but not in the crystal structures (PubMed:31376411). The lid region binds the phosphate backbone of one DNA duplex, while the H2TH motif contacts another duplex (PubMed:23427309, PubMed:31376411).</text>
</comment>
<comment type="disruption phenotype">
    <text evidence="2 3">Not essential for growth. Has altered antibiotic production (actinorhodin and undecylprodigiosin) in minimal and complex (R5- or R2YE) media; antibiotic production may be differentially responsive to carbon source and growth conditions. Decreased sporulation; on some media no spores are formed. Spores are larger, 8-10% are empty and their DNA content varies widely (PubMed:22038127, PubMed:23427309). More sensitive to heat shock. Altered expression of some transcriptional regulators (PubMed:22038127). DNA is less compacted in spores (PubMed:23427309).</text>
</comment>
<comment type="miscellaneous">
    <text evidence="9 10">In S.coelicolor chromosome condensation only takes place during sporulation in aerial cells.</text>
</comment>
<comment type="similarity">
    <text evidence="8">Belongs to the actinobacterial IHF (aIHF) family.</text>
</comment>